<dbReference type="EC" id="2.1.1.228" evidence="1"/>
<dbReference type="EMBL" id="CT573213">
    <property type="protein sequence ID" value="CAJ64422.1"/>
    <property type="molecule type" value="Genomic_DNA"/>
</dbReference>
<dbReference type="RefSeq" id="WP_011606862.1">
    <property type="nucleotide sequence ID" value="NC_008278.1"/>
</dbReference>
<dbReference type="SMR" id="Q0RDP4"/>
<dbReference type="STRING" id="326424.FRAAL5790"/>
<dbReference type="KEGG" id="fal:FRAAL5790"/>
<dbReference type="eggNOG" id="COG0336">
    <property type="taxonomic scope" value="Bacteria"/>
</dbReference>
<dbReference type="HOGENOM" id="CLU_047363_0_1_11"/>
<dbReference type="OrthoDB" id="9807416at2"/>
<dbReference type="Proteomes" id="UP000000657">
    <property type="component" value="Chromosome"/>
</dbReference>
<dbReference type="GO" id="GO:0005829">
    <property type="term" value="C:cytosol"/>
    <property type="evidence" value="ECO:0007669"/>
    <property type="project" value="TreeGrafter"/>
</dbReference>
<dbReference type="GO" id="GO:0052906">
    <property type="term" value="F:tRNA (guanine(37)-N1)-methyltransferase activity"/>
    <property type="evidence" value="ECO:0007669"/>
    <property type="project" value="UniProtKB-UniRule"/>
</dbReference>
<dbReference type="GO" id="GO:0002939">
    <property type="term" value="P:tRNA N1-guanine methylation"/>
    <property type="evidence" value="ECO:0007669"/>
    <property type="project" value="TreeGrafter"/>
</dbReference>
<dbReference type="CDD" id="cd18080">
    <property type="entry name" value="TrmD-like"/>
    <property type="match status" value="1"/>
</dbReference>
<dbReference type="FunFam" id="1.10.1270.20:FF:000001">
    <property type="entry name" value="tRNA (guanine-N(1)-)-methyltransferase"/>
    <property type="match status" value="1"/>
</dbReference>
<dbReference type="FunFam" id="3.40.1280.10:FF:000001">
    <property type="entry name" value="tRNA (guanine-N(1)-)-methyltransferase"/>
    <property type="match status" value="1"/>
</dbReference>
<dbReference type="Gene3D" id="3.40.1280.10">
    <property type="match status" value="1"/>
</dbReference>
<dbReference type="Gene3D" id="1.10.1270.20">
    <property type="entry name" value="tRNA(m1g37)methyltransferase, domain 2"/>
    <property type="match status" value="1"/>
</dbReference>
<dbReference type="HAMAP" id="MF_00605">
    <property type="entry name" value="TrmD"/>
    <property type="match status" value="1"/>
</dbReference>
<dbReference type="InterPro" id="IPR029028">
    <property type="entry name" value="Alpha/beta_knot_MTases"/>
</dbReference>
<dbReference type="InterPro" id="IPR023148">
    <property type="entry name" value="tRNA_m1G_MeTrfase_C_sf"/>
</dbReference>
<dbReference type="InterPro" id="IPR002649">
    <property type="entry name" value="tRNA_m1G_MeTrfase_TrmD"/>
</dbReference>
<dbReference type="InterPro" id="IPR029026">
    <property type="entry name" value="tRNA_m1G_MTases_N"/>
</dbReference>
<dbReference type="InterPro" id="IPR016009">
    <property type="entry name" value="tRNA_MeTrfase_TRMD/TRM10"/>
</dbReference>
<dbReference type="NCBIfam" id="NF000648">
    <property type="entry name" value="PRK00026.1"/>
    <property type="match status" value="1"/>
</dbReference>
<dbReference type="NCBIfam" id="TIGR00088">
    <property type="entry name" value="trmD"/>
    <property type="match status" value="1"/>
</dbReference>
<dbReference type="PANTHER" id="PTHR46417">
    <property type="entry name" value="TRNA (GUANINE-N(1)-)-METHYLTRANSFERASE"/>
    <property type="match status" value="1"/>
</dbReference>
<dbReference type="PANTHER" id="PTHR46417:SF1">
    <property type="entry name" value="TRNA (GUANINE-N(1)-)-METHYLTRANSFERASE"/>
    <property type="match status" value="1"/>
</dbReference>
<dbReference type="Pfam" id="PF01746">
    <property type="entry name" value="tRNA_m1G_MT"/>
    <property type="match status" value="1"/>
</dbReference>
<dbReference type="PIRSF" id="PIRSF000386">
    <property type="entry name" value="tRNA_mtase"/>
    <property type="match status" value="1"/>
</dbReference>
<dbReference type="SUPFAM" id="SSF75217">
    <property type="entry name" value="alpha/beta knot"/>
    <property type="match status" value="1"/>
</dbReference>
<feature type="chain" id="PRO_1000006476" description="tRNA (guanine-N(1)-)-methyltransferase">
    <location>
        <begin position="1"/>
        <end position="264"/>
    </location>
</feature>
<feature type="region of interest" description="Disordered" evidence="2">
    <location>
        <begin position="244"/>
        <end position="264"/>
    </location>
</feature>
<feature type="binding site" evidence="1">
    <location>
        <position position="113"/>
    </location>
    <ligand>
        <name>S-adenosyl-L-methionine</name>
        <dbReference type="ChEBI" id="CHEBI:59789"/>
    </ligand>
</feature>
<feature type="binding site" evidence="1">
    <location>
        <begin position="133"/>
        <end position="138"/>
    </location>
    <ligand>
        <name>S-adenosyl-L-methionine</name>
        <dbReference type="ChEBI" id="CHEBI:59789"/>
    </ligand>
</feature>
<gene>
    <name evidence="1" type="primary">trmD</name>
    <name type="ordered locus">FRAAL5790</name>
</gene>
<organism>
    <name type="scientific">Frankia alni (strain DSM 45986 / CECT 9034 / ACN14a)</name>
    <dbReference type="NCBI Taxonomy" id="326424"/>
    <lineage>
        <taxon>Bacteria</taxon>
        <taxon>Bacillati</taxon>
        <taxon>Actinomycetota</taxon>
        <taxon>Actinomycetes</taxon>
        <taxon>Frankiales</taxon>
        <taxon>Frankiaceae</taxon>
        <taxon>Frankia</taxon>
    </lineage>
</organism>
<comment type="function">
    <text evidence="1">Specifically methylates guanosine-37 in various tRNAs.</text>
</comment>
<comment type="catalytic activity">
    <reaction evidence="1">
        <text>guanosine(37) in tRNA + S-adenosyl-L-methionine = N(1)-methylguanosine(37) in tRNA + S-adenosyl-L-homocysteine + H(+)</text>
        <dbReference type="Rhea" id="RHEA:36899"/>
        <dbReference type="Rhea" id="RHEA-COMP:10145"/>
        <dbReference type="Rhea" id="RHEA-COMP:10147"/>
        <dbReference type="ChEBI" id="CHEBI:15378"/>
        <dbReference type="ChEBI" id="CHEBI:57856"/>
        <dbReference type="ChEBI" id="CHEBI:59789"/>
        <dbReference type="ChEBI" id="CHEBI:73542"/>
        <dbReference type="ChEBI" id="CHEBI:74269"/>
        <dbReference type="EC" id="2.1.1.228"/>
    </reaction>
</comment>
<comment type="subunit">
    <text evidence="1">Homodimer.</text>
</comment>
<comment type="subcellular location">
    <subcellularLocation>
        <location evidence="1">Cytoplasm</location>
    </subcellularLocation>
</comment>
<comment type="similarity">
    <text evidence="1">Belongs to the RNA methyltransferase TrmD family.</text>
</comment>
<protein>
    <recommendedName>
        <fullName evidence="1">tRNA (guanine-N(1)-)-methyltransferase</fullName>
        <ecNumber evidence="1">2.1.1.228</ecNumber>
    </recommendedName>
    <alternativeName>
        <fullName evidence="1">M1G-methyltransferase</fullName>
    </alternativeName>
    <alternativeName>
        <fullName evidence="1">tRNA [GM37] methyltransferase</fullName>
    </alternativeName>
</protein>
<accession>Q0RDP4</accession>
<name>TRMD_FRAAA</name>
<reference key="1">
    <citation type="journal article" date="2007" name="Genome Res.">
        <title>Genome characteristics of facultatively symbiotic Frankia sp. strains reflect host range and host plant biogeography.</title>
        <authorList>
            <person name="Normand P."/>
            <person name="Lapierre P."/>
            <person name="Tisa L.S."/>
            <person name="Gogarten J.P."/>
            <person name="Alloisio N."/>
            <person name="Bagnarol E."/>
            <person name="Bassi C.A."/>
            <person name="Berry A.M."/>
            <person name="Bickhart D.M."/>
            <person name="Choisne N."/>
            <person name="Couloux A."/>
            <person name="Cournoyer B."/>
            <person name="Cruveiller S."/>
            <person name="Daubin V."/>
            <person name="Demange N."/>
            <person name="Francino M.P."/>
            <person name="Goltsman E."/>
            <person name="Huang Y."/>
            <person name="Kopp O.R."/>
            <person name="Labarre L."/>
            <person name="Lapidus A."/>
            <person name="Lavire C."/>
            <person name="Marechal J."/>
            <person name="Martinez M."/>
            <person name="Mastronunzio J.E."/>
            <person name="Mullin B.C."/>
            <person name="Niemann J."/>
            <person name="Pujic P."/>
            <person name="Rawnsley T."/>
            <person name="Rouy Z."/>
            <person name="Schenowitz C."/>
            <person name="Sellstedt A."/>
            <person name="Tavares F."/>
            <person name="Tomkins J.P."/>
            <person name="Vallenet D."/>
            <person name="Valverde C."/>
            <person name="Wall L.G."/>
            <person name="Wang Y."/>
            <person name="Medigue C."/>
            <person name="Benson D.R."/>
        </authorList>
    </citation>
    <scope>NUCLEOTIDE SEQUENCE [LARGE SCALE GENOMIC DNA]</scope>
    <source>
        <strain>DSM 45986 / CECT 9034 / ACN14a</strain>
    </source>
</reference>
<keyword id="KW-0963">Cytoplasm</keyword>
<keyword id="KW-0489">Methyltransferase</keyword>
<keyword id="KW-1185">Reference proteome</keyword>
<keyword id="KW-0949">S-adenosyl-L-methionine</keyword>
<keyword id="KW-0808">Transferase</keyword>
<keyword id="KW-0819">tRNA processing</keyword>
<proteinExistence type="inferred from homology"/>
<sequence>MRADVVTIFPAYLEPLRLSLVGRAQERGTLEVRTHDLRAWTSDVHRTVDDAPYGGGPGMVMRPEPWDAALSEIAASDPARRPRVVVPTPAGRPFSQRHAEELAQEPWLVFCCGRYEGIDARVIETWADDEISIGDYVLAGGEVATLVILEAVARLLPGVLGNSASAADDSFSDGLLEAPAYTRPQVWRGVEVPAVLRSGDHAAVARWRRAQALRRTVARRPDLVAQAELSDADRAVLDAVAAEVQQAATPGGQRRPPWHRDSRA</sequence>
<evidence type="ECO:0000255" key="1">
    <source>
        <dbReference type="HAMAP-Rule" id="MF_00605"/>
    </source>
</evidence>
<evidence type="ECO:0000256" key="2">
    <source>
        <dbReference type="SAM" id="MobiDB-lite"/>
    </source>
</evidence>